<evidence type="ECO:0000255" key="1">
    <source>
        <dbReference type="HAMAP-Rule" id="MF_01588"/>
    </source>
</evidence>
<evidence type="ECO:0000305" key="2"/>
<accession>Q0HWD2</accession>
<sequence>MQDIQLDKRLSELLSQAVTPQNAQPLMQALCQSLNEHNIRYYVDDAPSITDSEYDRLMQRLKQLEAEYPQFVAADSPTQRVGGMALAKFEQITHLKPMLSLDNAFDEADFSAFHKRVSDRVGEVSFCCEPKLDGLAVSILYRNGVLERAATRGDGTVGEDITENVKTIKSIPLKLRGDNYPELVEVRGEAFMPKAAFEALNERARLKDEKLFVNPRNAAAGSLRQLDSKITASRALSFYAYALGVVEPTSHELAKTHYEQLQQLKSWGLPVSSEIKVCDELSQVFAYYQDILTRRADLPFEIDGVVMKVNDIAQQQTLGFVAKSPRWAIAYKFPAQEEMTLLEGVDFQVGRTGAVTPVARLKPVFVGGVTVSNATLHNADEIERLGVMVGDTVIIRRAGDVIPQIVAIVPERRPEDAKAIAFPQHCPVCGSLVERLEGEAVTRCSGGLFCEAQRKEAIKHFASRKALDIDGMGDKIVEQLIDKELVQSPADLFKLTASMMTMLDRMGMKSATNLAQAIEAAKTTTLPRFLYALGIREVGEATAANLATHFGSLEALRVATIEQLIQVEDIGEVVAQHVAHFFAQPHNLEVIDALITAGVNWPTIAAPSADEQPLKGQTWVLTGTLNQLNRNDAKAQLQALGAKVAGSVSKNTDCLVAGEAAGSKLAKAQELGVKVIGEDELLALLANS</sequence>
<name>DNLJ_SHESR</name>
<comment type="function">
    <text evidence="1">DNA ligase that catalyzes the formation of phosphodiester linkages between 5'-phosphoryl and 3'-hydroxyl groups in double-stranded DNA using NAD as a coenzyme and as the energy source for the reaction. It is essential for DNA replication and repair of damaged DNA.</text>
</comment>
<comment type="catalytic activity">
    <reaction evidence="1">
        <text>NAD(+) + (deoxyribonucleotide)n-3'-hydroxyl + 5'-phospho-(deoxyribonucleotide)m = (deoxyribonucleotide)n+m + AMP + beta-nicotinamide D-nucleotide.</text>
        <dbReference type="EC" id="6.5.1.2"/>
    </reaction>
</comment>
<comment type="cofactor">
    <cofactor evidence="1">
        <name>Mg(2+)</name>
        <dbReference type="ChEBI" id="CHEBI:18420"/>
    </cofactor>
    <cofactor evidence="1">
        <name>Mn(2+)</name>
        <dbReference type="ChEBI" id="CHEBI:29035"/>
    </cofactor>
</comment>
<comment type="similarity">
    <text evidence="1">Belongs to the NAD-dependent DNA ligase family. LigA subfamily.</text>
</comment>
<comment type="sequence caution" evidence="2">
    <conflict type="erroneous initiation">
        <sequence resource="EMBL-CDS" id="ABI42573"/>
    </conflict>
</comment>
<protein>
    <recommendedName>
        <fullName evidence="1">DNA ligase</fullName>
        <ecNumber evidence="1">6.5.1.2</ecNumber>
    </recommendedName>
    <alternativeName>
        <fullName evidence="1">Polydeoxyribonucleotide synthase [NAD(+)]</fullName>
    </alternativeName>
</protein>
<organism>
    <name type="scientific">Shewanella sp. (strain MR-7)</name>
    <dbReference type="NCBI Taxonomy" id="60481"/>
    <lineage>
        <taxon>Bacteria</taxon>
        <taxon>Pseudomonadati</taxon>
        <taxon>Pseudomonadota</taxon>
        <taxon>Gammaproteobacteria</taxon>
        <taxon>Alteromonadales</taxon>
        <taxon>Shewanellaceae</taxon>
        <taxon>Shewanella</taxon>
    </lineage>
</organism>
<proteinExistence type="inferred from homology"/>
<feature type="chain" id="PRO_0000313432" description="DNA ligase">
    <location>
        <begin position="1"/>
        <end position="688"/>
    </location>
</feature>
<feature type="domain" description="BRCT" evidence="1">
    <location>
        <begin position="609"/>
        <end position="688"/>
    </location>
</feature>
<feature type="active site" description="N6-AMP-lysine intermediate" evidence="1">
    <location>
        <position position="131"/>
    </location>
</feature>
<feature type="binding site" evidence="1">
    <location>
        <begin position="51"/>
        <end position="55"/>
    </location>
    <ligand>
        <name>NAD(+)</name>
        <dbReference type="ChEBI" id="CHEBI:57540"/>
    </ligand>
</feature>
<feature type="binding site" evidence="1">
    <location>
        <begin position="100"/>
        <end position="101"/>
    </location>
    <ligand>
        <name>NAD(+)</name>
        <dbReference type="ChEBI" id="CHEBI:57540"/>
    </ligand>
</feature>
<feature type="binding site" evidence="1">
    <location>
        <position position="129"/>
    </location>
    <ligand>
        <name>NAD(+)</name>
        <dbReference type="ChEBI" id="CHEBI:57540"/>
    </ligand>
</feature>
<feature type="binding site" evidence="1">
    <location>
        <position position="152"/>
    </location>
    <ligand>
        <name>NAD(+)</name>
        <dbReference type="ChEBI" id="CHEBI:57540"/>
    </ligand>
</feature>
<feature type="binding site" evidence="1">
    <location>
        <position position="189"/>
    </location>
    <ligand>
        <name>NAD(+)</name>
        <dbReference type="ChEBI" id="CHEBI:57540"/>
    </ligand>
</feature>
<feature type="binding site" evidence="1">
    <location>
        <position position="308"/>
    </location>
    <ligand>
        <name>NAD(+)</name>
        <dbReference type="ChEBI" id="CHEBI:57540"/>
    </ligand>
</feature>
<feature type="binding site" evidence="1">
    <location>
        <position position="332"/>
    </location>
    <ligand>
        <name>NAD(+)</name>
        <dbReference type="ChEBI" id="CHEBI:57540"/>
    </ligand>
</feature>
<feature type="binding site" evidence="1">
    <location>
        <position position="426"/>
    </location>
    <ligand>
        <name>Zn(2+)</name>
        <dbReference type="ChEBI" id="CHEBI:29105"/>
    </ligand>
</feature>
<feature type="binding site" evidence="1">
    <location>
        <position position="429"/>
    </location>
    <ligand>
        <name>Zn(2+)</name>
        <dbReference type="ChEBI" id="CHEBI:29105"/>
    </ligand>
</feature>
<feature type="binding site" evidence="1">
    <location>
        <position position="444"/>
    </location>
    <ligand>
        <name>Zn(2+)</name>
        <dbReference type="ChEBI" id="CHEBI:29105"/>
    </ligand>
</feature>
<feature type="binding site" evidence="1">
    <location>
        <position position="450"/>
    </location>
    <ligand>
        <name>Zn(2+)</name>
        <dbReference type="ChEBI" id="CHEBI:29105"/>
    </ligand>
</feature>
<dbReference type="EC" id="6.5.1.2" evidence="1"/>
<dbReference type="EMBL" id="CP000444">
    <property type="protein sequence ID" value="ABI42573.1"/>
    <property type="status" value="ALT_INIT"/>
    <property type="molecule type" value="Genomic_DNA"/>
</dbReference>
<dbReference type="SMR" id="Q0HWD2"/>
<dbReference type="KEGG" id="shm:Shewmr7_1575"/>
<dbReference type="HOGENOM" id="CLU_007764_2_1_6"/>
<dbReference type="GO" id="GO:0005829">
    <property type="term" value="C:cytosol"/>
    <property type="evidence" value="ECO:0007669"/>
    <property type="project" value="TreeGrafter"/>
</dbReference>
<dbReference type="GO" id="GO:0003677">
    <property type="term" value="F:DNA binding"/>
    <property type="evidence" value="ECO:0007669"/>
    <property type="project" value="InterPro"/>
</dbReference>
<dbReference type="GO" id="GO:0003911">
    <property type="term" value="F:DNA ligase (NAD+) activity"/>
    <property type="evidence" value="ECO:0007669"/>
    <property type="project" value="UniProtKB-UniRule"/>
</dbReference>
<dbReference type="GO" id="GO:0046872">
    <property type="term" value="F:metal ion binding"/>
    <property type="evidence" value="ECO:0007669"/>
    <property type="project" value="UniProtKB-KW"/>
</dbReference>
<dbReference type="GO" id="GO:0006281">
    <property type="term" value="P:DNA repair"/>
    <property type="evidence" value="ECO:0007669"/>
    <property type="project" value="UniProtKB-KW"/>
</dbReference>
<dbReference type="GO" id="GO:0006260">
    <property type="term" value="P:DNA replication"/>
    <property type="evidence" value="ECO:0007669"/>
    <property type="project" value="UniProtKB-KW"/>
</dbReference>
<dbReference type="CDD" id="cd17748">
    <property type="entry name" value="BRCT_DNA_ligase_like"/>
    <property type="match status" value="1"/>
</dbReference>
<dbReference type="CDD" id="cd00114">
    <property type="entry name" value="LIGANc"/>
    <property type="match status" value="1"/>
</dbReference>
<dbReference type="FunFam" id="1.10.150.20:FF:000006">
    <property type="entry name" value="DNA ligase"/>
    <property type="match status" value="1"/>
</dbReference>
<dbReference type="FunFam" id="1.10.150.20:FF:000007">
    <property type="entry name" value="DNA ligase"/>
    <property type="match status" value="1"/>
</dbReference>
<dbReference type="FunFam" id="1.10.287.610:FF:000002">
    <property type="entry name" value="DNA ligase"/>
    <property type="match status" value="1"/>
</dbReference>
<dbReference type="FunFam" id="2.40.50.140:FF:000012">
    <property type="entry name" value="DNA ligase"/>
    <property type="match status" value="1"/>
</dbReference>
<dbReference type="FunFam" id="3.30.470.30:FF:000001">
    <property type="entry name" value="DNA ligase"/>
    <property type="match status" value="1"/>
</dbReference>
<dbReference type="FunFam" id="6.20.10.30:FF:000001">
    <property type="entry name" value="DNA ligase"/>
    <property type="match status" value="1"/>
</dbReference>
<dbReference type="Gene3D" id="6.20.10.30">
    <property type="match status" value="1"/>
</dbReference>
<dbReference type="Gene3D" id="1.10.150.20">
    <property type="entry name" value="5' to 3' exonuclease, C-terminal subdomain"/>
    <property type="match status" value="2"/>
</dbReference>
<dbReference type="Gene3D" id="3.40.50.10190">
    <property type="entry name" value="BRCT domain"/>
    <property type="match status" value="1"/>
</dbReference>
<dbReference type="Gene3D" id="3.30.470.30">
    <property type="entry name" value="DNA ligase/mRNA capping enzyme"/>
    <property type="match status" value="1"/>
</dbReference>
<dbReference type="Gene3D" id="1.10.287.610">
    <property type="entry name" value="Helix hairpin bin"/>
    <property type="match status" value="1"/>
</dbReference>
<dbReference type="Gene3D" id="2.40.50.140">
    <property type="entry name" value="Nucleic acid-binding proteins"/>
    <property type="match status" value="1"/>
</dbReference>
<dbReference type="HAMAP" id="MF_01588">
    <property type="entry name" value="DNA_ligase_A"/>
    <property type="match status" value="1"/>
</dbReference>
<dbReference type="InterPro" id="IPR001357">
    <property type="entry name" value="BRCT_dom"/>
</dbReference>
<dbReference type="InterPro" id="IPR036420">
    <property type="entry name" value="BRCT_dom_sf"/>
</dbReference>
<dbReference type="InterPro" id="IPR041663">
    <property type="entry name" value="DisA/LigA_HHH"/>
</dbReference>
<dbReference type="InterPro" id="IPR001679">
    <property type="entry name" value="DNA_ligase"/>
</dbReference>
<dbReference type="InterPro" id="IPR018239">
    <property type="entry name" value="DNA_ligase_AS"/>
</dbReference>
<dbReference type="InterPro" id="IPR033136">
    <property type="entry name" value="DNA_ligase_CS"/>
</dbReference>
<dbReference type="InterPro" id="IPR013839">
    <property type="entry name" value="DNAligase_adenylation"/>
</dbReference>
<dbReference type="InterPro" id="IPR013840">
    <property type="entry name" value="DNAligase_N"/>
</dbReference>
<dbReference type="InterPro" id="IPR003583">
    <property type="entry name" value="Hlx-hairpin-Hlx_DNA-bd_motif"/>
</dbReference>
<dbReference type="InterPro" id="IPR012340">
    <property type="entry name" value="NA-bd_OB-fold"/>
</dbReference>
<dbReference type="InterPro" id="IPR004150">
    <property type="entry name" value="NAD_DNA_ligase_OB"/>
</dbReference>
<dbReference type="InterPro" id="IPR010994">
    <property type="entry name" value="RuvA_2-like"/>
</dbReference>
<dbReference type="InterPro" id="IPR004149">
    <property type="entry name" value="Znf_DNAligase_C4"/>
</dbReference>
<dbReference type="NCBIfam" id="TIGR00575">
    <property type="entry name" value="dnlj"/>
    <property type="match status" value="1"/>
</dbReference>
<dbReference type="NCBIfam" id="NF005932">
    <property type="entry name" value="PRK07956.1"/>
    <property type="match status" value="1"/>
</dbReference>
<dbReference type="PANTHER" id="PTHR23389">
    <property type="entry name" value="CHROMOSOME TRANSMISSION FIDELITY FACTOR 18"/>
    <property type="match status" value="1"/>
</dbReference>
<dbReference type="PANTHER" id="PTHR23389:SF9">
    <property type="entry name" value="DNA LIGASE"/>
    <property type="match status" value="1"/>
</dbReference>
<dbReference type="Pfam" id="PF00533">
    <property type="entry name" value="BRCT"/>
    <property type="match status" value="1"/>
</dbReference>
<dbReference type="Pfam" id="PF01653">
    <property type="entry name" value="DNA_ligase_aden"/>
    <property type="match status" value="1"/>
</dbReference>
<dbReference type="Pfam" id="PF03120">
    <property type="entry name" value="DNA_ligase_OB"/>
    <property type="match status" value="1"/>
</dbReference>
<dbReference type="Pfam" id="PF03119">
    <property type="entry name" value="DNA_ligase_ZBD"/>
    <property type="match status" value="1"/>
</dbReference>
<dbReference type="Pfam" id="PF12826">
    <property type="entry name" value="HHH_2"/>
    <property type="match status" value="1"/>
</dbReference>
<dbReference type="PIRSF" id="PIRSF001604">
    <property type="entry name" value="LigA"/>
    <property type="match status" value="1"/>
</dbReference>
<dbReference type="SMART" id="SM00292">
    <property type="entry name" value="BRCT"/>
    <property type="match status" value="1"/>
</dbReference>
<dbReference type="SMART" id="SM00278">
    <property type="entry name" value="HhH1"/>
    <property type="match status" value="3"/>
</dbReference>
<dbReference type="SMART" id="SM00532">
    <property type="entry name" value="LIGANc"/>
    <property type="match status" value="1"/>
</dbReference>
<dbReference type="SUPFAM" id="SSF52113">
    <property type="entry name" value="BRCT domain"/>
    <property type="match status" value="1"/>
</dbReference>
<dbReference type="SUPFAM" id="SSF56091">
    <property type="entry name" value="DNA ligase/mRNA capping enzyme, catalytic domain"/>
    <property type="match status" value="1"/>
</dbReference>
<dbReference type="SUPFAM" id="SSF50249">
    <property type="entry name" value="Nucleic acid-binding proteins"/>
    <property type="match status" value="1"/>
</dbReference>
<dbReference type="SUPFAM" id="SSF47781">
    <property type="entry name" value="RuvA domain 2-like"/>
    <property type="match status" value="1"/>
</dbReference>
<dbReference type="PROSITE" id="PS50172">
    <property type="entry name" value="BRCT"/>
    <property type="match status" value="1"/>
</dbReference>
<dbReference type="PROSITE" id="PS01055">
    <property type="entry name" value="DNA_LIGASE_N1"/>
    <property type="match status" value="1"/>
</dbReference>
<dbReference type="PROSITE" id="PS01056">
    <property type="entry name" value="DNA_LIGASE_N2"/>
    <property type="match status" value="1"/>
</dbReference>
<keyword id="KW-0227">DNA damage</keyword>
<keyword id="KW-0234">DNA repair</keyword>
<keyword id="KW-0235">DNA replication</keyword>
<keyword id="KW-0436">Ligase</keyword>
<keyword id="KW-0460">Magnesium</keyword>
<keyword id="KW-0464">Manganese</keyword>
<keyword id="KW-0479">Metal-binding</keyword>
<keyword id="KW-0520">NAD</keyword>
<keyword id="KW-0862">Zinc</keyword>
<reference key="1">
    <citation type="submission" date="2006-08" db="EMBL/GenBank/DDBJ databases">
        <title>Complete sequence of chromosome 1 of Shewanella sp. MR-7.</title>
        <authorList>
            <person name="Copeland A."/>
            <person name="Lucas S."/>
            <person name="Lapidus A."/>
            <person name="Barry K."/>
            <person name="Detter J.C."/>
            <person name="Glavina del Rio T."/>
            <person name="Hammon N."/>
            <person name="Israni S."/>
            <person name="Dalin E."/>
            <person name="Tice H."/>
            <person name="Pitluck S."/>
            <person name="Kiss H."/>
            <person name="Brettin T."/>
            <person name="Bruce D."/>
            <person name="Han C."/>
            <person name="Tapia R."/>
            <person name="Gilna P."/>
            <person name="Schmutz J."/>
            <person name="Larimer F."/>
            <person name="Land M."/>
            <person name="Hauser L."/>
            <person name="Kyrpides N."/>
            <person name="Mikhailova N."/>
            <person name="Nealson K."/>
            <person name="Konstantinidis K."/>
            <person name="Klappenbach J."/>
            <person name="Tiedje J."/>
            <person name="Richardson P."/>
        </authorList>
    </citation>
    <scope>NUCLEOTIDE SEQUENCE [LARGE SCALE GENOMIC DNA]</scope>
    <source>
        <strain>MR-7</strain>
    </source>
</reference>
<gene>
    <name evidence="1" type="primary">ligA</name>
    <name type="ordered locus">Shewmr7_1575</name>
</gene>